<sequence length="116" mass="12887">MADLIPLAQARCVPRKGSDHKLGEARLAELLPQIPGWELSEGGQALSRTFRFKDYYATMAFVNALAWIAHREDHHPDLGVHYDRAVVRFSTHDVGGLSENDFICAAKTSALTEQLP</sequence>
<organism>
    <name type="scientific">Stenotrophomonas maltophilia (strain K279a)</name>
    <dbReference type="NCBI Taxonomy" id="522373"/>
    <lineage>
        <taxon>Bacteria</taxon>
        <taxon>Pseudomonadati</taxon>
        <taxon>Pseudomonadota</taxon>
        <taxon>Gammaproteobacteria</taxon>
        <taxon>Lysobacterales</taxon>
        <taxon>Lysobacteraceae</taxon>
        <taxon>Stenotrophomonas</taxon>
        <taxon>Stenotrophomonas maltophilia group</taxon>
    </lineage>
</organism>
<dbReference type="EC" id="4.2.1.96" evidence="1"/>
<dbReference type="EMBL" id="AM743169">
    <property type="protein sequence ID" value="CAQ46683.1"/>
    <property type="molecule type" value="Genomic_DNA"/>
</dbReference>
<dbReference type="RefSeq" id="WP_006456031.1">
    <property type="nucleotide sequence ID" value="NC_010943.1"/>
</dbReference>
<dbReference type="SMR" id="B2FM88"/>
<dbReference type="EnsemblBacteria" id="CAQ46683">
    <property type="protein sequence ID" value="CAQ46683"/>
    <property type="gene ID" value="Smlt3243"/>
</dbReference>
<dbReference type="KEGG" id="sml:Smlt3243"/>
<dbReference type="eggNOG" id="COG2154">
    <property type="taxonomic scope" value="Bacteria"/>
</dbReference>
<dbReference type="HOGENOM" id="CLU_081974_2_1_6"/>
<dbReference type="Proteomes" id="UP000008840">
    <property type="component" value="Chromosome"/>
</dbReference>
<dbReference type="GO" id="GO:0008124">
    <property type="term" value="F:4-alpha-hydroxytetrahydrobiopterin dehydratase activity"/>
    <property type="evidence" value="ECO:0007669"/>
    <property type="project" value="UniProtKB-UniRule"/>
</dbReference>
<dbReference type="GO" id="GO:0006729">
    <property type="term" value="P:tetrahydrobiopterin biosynthetic process"/>
    <property type="evidence" value="ECO:0007669"/>
    <property type="project" value="InterPro"/>
</dbReference>
<dbReference type="CDD" id="cd00913">
    <property type="entry name" value="PCD_DCoH_subfamily_a"/>
    <property type="match status" value="1"/>
</dbReference>
<dbReference type="Gene3D" id="3.30.1360.20">
    <property type="entry name" value="Transcriptional coactivator/pterin dehydratase"/>
    <property type="match status" value="1"/>
</dbReference>
<dbReference type="HAMAP" id="MF_00434">
    <property type="entry name" value="Pterin_4_alpha"/>
    <property type="match status" value="1"/>
</dbReference>
<dbReference type="InterPro" id="IPR036428">
    <property type="entry name" value="PCD_sf"/>
</dbReference>
<dbReference type="InterPro" id="IPR001533">
    <property type="entry name" value="Pterin_deHydtase"/>
</dbReference>
<dbReference type="NCBIfam" id="NF002019">
    <property type="entry name" value="PRK00823.1-4"/>
    <property type="match status" value="1"/>
</dbReference>
<dbReference type="PANTHER" id="PTHR12599">
    <property type="entry name" value="PTERIN-4-ALPHA-CARBINOLAMINE DEHYDRATASE"/>
    <property type="match status" value="1"/>
</dbReference>
<dbReference type="PANTHER" id="PTHR12599:SF0">
    <property type="entry name" value="PTERIN-4-ALPHA-CARBINOLAMINE DEHYDRATASE"/>
    <property type="match status" value="1"/>
</dbReference>
<dbReference type="Pfam" id="PF01329">
    <property type="entry name" value="Pterin_4a"/>
    <property type="match status" value="1"/>
</dbReference>
<dbReference type="SUPFAM" id="SSF55248">
    <property type="entry name" value="PCD-like"/>
    <property type="match status" value="1"/>
</dbReference>
<name>PHS_STRMK</name>
<evidence type="ECO:0000255" key="1">
    <source>
        <dbReference type="HAMAP-Rule" id="MF_00434"/>
    </source>
</evidence>
<gene>
    <name type="ordered locus">Smlt3243</name>
</gene>
<accession>B2FM88</accession>
<comment type="catalytic activity">
    <reaction evidence="1">
        <text>(4aS,6R)-4a-hydroxy-L-erythro-5,6,7,8-tetrahydrobiopterin = (6R)-L-erythro-6,7-dihydrobiopterin + H2O</text>
        <dbReference type="Rhea" id="RHEA:11920"/>
        <dbReference type="ChEBI" id="CHEBI:15377"/>
        <dbReference type="ChEBI" id="CHEBI:15642"/>
        <dbReference type="ChEBI" id="CHEBI:43120"/>
        <dbReference type="EC" id="4.2.1.96"/>
    </reaction>
</comment>
<comment type="similarity">
    <text evidence="1">Belongs to the pterin-4-alpha-carbinolamine dehydratase family.</text>
</comment>
<proteinExistence type="inferred from homology"/>
<reference key="1">
    <citation type="journal article" date="2008" name="Genome Biol.">
        <title>The complete genome, comparative and functional analysis of Stenotrophomonas maltophilia reveals an organism heavily shielded by drug resistance determinants.</title>
        <authorList>
            <person name="Crossman L.C."/>
            <person name="Gould V.C."/>
            <person name="Dow J.M."/>
            <person name="Vernikos G.S."/>
            <person name="Okazaki A."/>
            <person name="Sebaihia M."/>
            <person name="Saunders D."/>
            <person name="Arrowsmith C."/>
            <person name="Carver T."/>
            <person name="Peters N."/>
            <person name="Adlem E."/>
            <person name="Kerhornou A."/>
            <person name="Lord A."/>
            <person name="Murphy L."/>
            <person name="Seeger K."/>
            <person name="Squares R."/>
            <person name="Rutter S."/>
            <person name="Quail M.A."/>
            <person name="Rajandream M.A."/>
            <person name="Harris D."/>
            <person name="Churcher C."/>
            <person name="Bentley S.D."/>
            <person name="Parkhill J."/>
            <person name="Thomson N.R."/>
            <person name="Avison M.B."/>
        </authorList>
    </citation>
    <scope>NUCLEOTIDE SEQUENCE [LARGE SCALE GENOMIC DNA]</scope>
    <source>
        <strain>K279a</strain>
    </source>
</reference>
<protein>
    <recommendedName>
        <fullName evidence="1">Putative pterin-4-alpha-carbinolamine dehydratase</fullName>
        <shortName evidence="1">PHS</shortName>
        <ecNumber evidence="1">4.2.1.96</ecNumber>
    </recommendedName>
    <alternativeName>
        <fullName evidence="1">4-alpha-hydroxy-tetrahydropterin dehydratase</fullName>
    </alternativeName>
    <alternativeName>
        <fullName evidence="1">Pterin carbinolamine dehydratase</fullName>
        <shortName evidence="1">PCD</shortName>
    </alternativeName>
</protein>
<keyword id="KW-0456">Lyase</keyword>
<keyword id="KW-1185">Reference proteome</keyword>
<feature type="chain" id="PRO_1000192939" description="Putative pterin-4-alpha-carbinolamine dehydratase">
    <location>
        <begin position="1"/>
        <end position="116"/>
    </location>
</feature>